<keyword id="KW-0067">ATP-binding</keyword>
<keyword id="KW-0414">Isoprene biosynthesis</keyword>
<keyword id="KW-0418">Kinase</keyword>
<keyword id="KW-0547">Nucleotide-binding</keyword>
<keyword id="KW-0808">Transferase</keyword>
<organism>
    <name type="scientific">Leptospira interrogans serogroup Icterohaemorrhagiae serovar copenhageni (strain Fiocruz L1-130)</name>
    <dbReference type="NCBI Taxonomy" id="267671"/>
    <lineage>
        <taxon>Bacteria</taxon>
        <taxon>Pseudomonadati</taxon>
        <taxon>Spirochaetota</taxon>
        <taxon>Spirochaetia</taxon>
        <taxon>Leptospirales</taxon>
        <taxon>Leptospiraceae</taxon>
        <taxon>Leptospira</taxon>
    </lineage>
</organism>
<feature type="chain" id="PRO_0000189228" description="4-diphosphocytidyl-2-C-methyl-D-erythritol kinase">
    <location>
        <begin position="1"/>
        <end position="297"/>
    </location>
</feature>
<feature type="active site" evidence="1">
    <location>
        <position position="6"/>
    </location>
</feature>
<feature type="active site" evidence="1">
    <location>
        <position position="144"/>
    </location>
</feature>
<sequence length="297" mass="33218">MISPAKINLGLEIPFKRLDGFHEIRSVFLKISWGDDIEIEPASNGVFELFSNNEIILEKRKLYDQVSERGDIKNNILYKTFIKARSLFPELPGVKIHLTKRISPAGGLGGGSTNAASLLNFLFSWCPFFTSDEMFVLAAEIGSDVPFFLGEGHAFVTGKGEILEEIEVHHGQGILALTPQVMNTSEMYSLLKKPLQESASQKNGNTLSKNLISILKNGDWSSLQGRLWNDFEPVAFQLHPELGVLKDKFLEFGSSYCSLTGSGSSMYGLVQGLEIQEELLQRLRQEFSNLTFVRFNF</sequence>
<protein>
    <recommendedName>
        <fullName evidence="1">4-diphosphocytidyl-2-C-methyl-D-erythritol kinase</fullName>
        <shortName evidence="1">CMK</shortName>
        <ecNumber evidence="1">2.7.1.148</ecNumber>
    </recommendedName>
    <alternativeName>
        <fullName evidence="1">4-(cytidine-5'-diphospho)-2-C-methyl-D-erythritol kinase</fullName>
    </alternativeName>
</protein>
<reference key="1">
    <citation type="journal article" date="2004" name="J. Bacteriol.">
        <title>Comparative genomics of two Leptospira interrogans serovars reveals novel insights into physiology and pathogenesis.</title>
        <authorList>
            <person name="Nascimento A.L.T.O."/>
            <person name="Ko A.I."/>
            <person name="Martins E.A.L."/>
            <person name="Monteiro-Vitorello C.B."/>
            <person name="Ho P.L."/>
            <person name="Haake D.A."/>
            <person name="Verjovski-Almeida S."/>
            <person name="Hartskeerl R.A."/>
            <person name="Marques M.V."/>
            <person name="Oliveira M.C."/>
            <person name="Menck C.F.M."/>
            <person name="Leite L.C.C."/>
            <person name="Carrer H."/>
            <person name="Coutinho L.L."/>
            <person name="Degrave W.M."/>
            <person name="Dellagostin O.A."/>
            <person name="El-Dorry H."/>
            <person name="Ferro E.S."/>
            <person name="Ferro M.I.T."/>
            <person name="Furlan L.R."/>
            <person name="Gamberini M."/>
            <person name="Giglioti E.A."/>
            <person name="Goes-Neto A."/>
            <person name="Goldman G.H."/>
            <person name="Goldman M.H.S."/>
            <person name="Harakava R."/>
            <person name="Jeronimo S.M.B."/>
            <person name="Junqueira-de-Azevedo I.L.M."/>
            <person name="Kimura E.T."/>
            <person name="Kuramae E.E."/>
            <person name="Lemos E.G.M."/>
            <person name="Lemos M.V.F."/>
            <person name="Marino C.L."/>
            <person name="Nunes L.R."/>
            <person name="de Oliveira R.C."/>
            <person name="Pereira G.G."/>
            <person name="Reis M.S."/>
            <person name="Schriefer A."/>
            <person name="Siqueira W.J."/>
            <person name="Sommer P."/>
            <person name="Tsai S.M."/>
            <person name="Simpson A.J.G."/>
            <person name="Ferro J.A."/>
            <person name="Camargo L.E.A."/>
            <person name="Kitajima J.P."/>
            <person name="Setubal J.C."/>
            <person name="Van Sluys M.A."/>
        </authorList>
    </citation>
    <scope>NUCLEOTIDE SEQUENCE [LARGE SCALE GENOMIC DNA]</scope>
    <source>
        <strain>Fiocruz L1-130</strain>
    </source>
</reference>
<gene>
    <name evidence="1" type="primary">ispE</name>
    <name type="ordered locus">LIC_10426</name>
</gene>
<proteinExistence type="inferred from homology"/>
<dbReference type="EC" id="2.7.1.148" evidence="1"/>
<dbReference type="EMBL" id="AE016823">
    <property type="protein sequence ID" value="AAS69049.1"/>
    <property type="molecule type" value="Genomic_DNA"/>
</dbReference>
<dbReference type="RefSeq" id="WP_000625234.1">
    <property type="nucleotide sequence ID" value="NC_005823.1"/>
</dbReference>
<dbReference type="SMR" id="Q72V75"/>
<dbReference type="KEGG" id="lic:LIC_10426"/>
<dbReference type="HOGENOM" id="CLU_053057_1_1_12"/>
<dbReference type="UniPathway" id="UPA00056">
    <property type="reaction ID" value="UER00094"/>
</dbReference>
<dbReference type="Proteomes" id="UP000007037">
    <property type="component" value="Chromosome I"/>
</dbReference>
<dbReference type="GO" id="GO:0050515">
    <property type="term" value="F:4-(cytidine 5'-diphospho)-2-C-methyl-D-erythritol kinase activity"/>
    <property type="evidence" value="ECO:0007669"/>
    <property type="project" value="UniProtKB-UniRule"/>
</dbReference>
<dbReference type="GO" id="GO:0005524">
    <property type="term" value="F:ATP binding"/>
    <property type="evidence" value="ECO:0007669"/>
    <property type="project" value="UniProtKB-UniRule"/>
</dbReference>
<dbReference type="GO" id="GO:0019288">
    <property type="term" value="P:isopentenyl diphosphate biosynthetic process, methylerythritol 4-phosphate pathway"/>
    <property type="evidence" value="ECO:0007669"/>
    <property type="project" value="UniProtKB-UniRule"/>
</dbReference>
<dbReference type="GO" id="GO:0016114">
    <property type="term" value="P:terpenoid biosynthetic process"/>
    <property type="evidence" value="ECO:0007669"/>
    <property type="project" value="InterPro"/>
</dbReference>
<dbReference type="FunFam" id="3.30.70.890:FF:000010">
    <property type="entry name" value="4-diphosphocytidyl-2-C-methyl-D-erythritol kinase"/>
    <property type="match status" value="1"/>
</dbReference>
<dbReference type="Gene3D" id="3.30.230.10">
    <property type="match status" value="1"/>
</dbReference>
<dbReference type="Gene3D" id="3.30.70.890">
    <property type="entry name" value="GHMP kinase, C-terminal domain"/>
    <property type="match status" value="1"/>
</dbReference>
<dbReference type="HAMAP" id="MF_00061">
    <property type="entry name" value="IspE"/>
    <property type="match status" value="1"/>
</dbReference>
<dbReference type="InterPro" id="IPR013750">
    <property type="entry name" value="GHMP_kinase_C_dom"/>
</dbReference>
<dbReference type="InterPro" id="IPR036554">
    <property type="entry name" value="GHMP_kinase_C_sf"/>
</dbReference>
<dbReference type="InterPro" id="IPR006204">
    <property type="entry name" value="GHMP_kinase_N_dom"/>
</dbReference>
<dbReference type="InterPro" id="IPR004424">
    <property type="entry name" value="IspE"/>
</dbReference>
<dbReference type="InterPro" id="IPR020568">
    <property type="entry name" value="Ribosomal_Su5_D2-typ_SF"/>
</dbReference>
<dbReference type="InterPro" id="IPR014721">
    <property type="entry name" value="Ribsml_uS5_D2-typ_fold_subgr"/>
</dbReference>
<dbReference type="NCBIfam" id="TIGR00154">
    <property type="entry name" value="ispE"/>
    <property type="match status" value="1"/>
</dbReference>
<dbReference type="NCBIfam" id="NF011207">
    <property type="entry name" value="PRK14613.1"/>
    <property type="match status" value="1"/>
</dbReference>
<dbReference type="PANTHER" id="PTHR43527">
    <property type="entry name" value="4-DIPHOSPHOCYTIDYL-2-C-METHYL-D-ERYTHRITOL KINASE, CHLOROPLASTIC"/>
    <property type="match status" value="1"/>
</dbReference>
<dbReference type="PANTHER" id="PTHR43527:SF2">
    <property type="entry name" value="4-DIPHOSPHOCYTIDYL-2-C-METHYL-D-ERYTHRITOL KINASE, CHLOROPLASTIC"/>
    <property type="match status" value="1"/>
</dbReference>
<dbReference type="Pfam" id="PF08544">
    <property type="entry name" value="GHMP_kinases_C"/>
    <property type="match status" value="1"/>
</dbReference>
<dbReference type="Pfam" id="PF00288">
    <property type="entry name" value="GHMP_kinases_N"/>
    <property type="match status" value="1"/>
</dbReference>
<dbReference type="PIRSF" id="PIRSF010376">
    <property type="entry name" value="IspE"/>
    <property type="match status" value="1"/>
</dbReference>
<dbReference type="SUPFAM" id="SSF55060">
    <property type="entry name" value="GHMP Kinase, C-terminal domain"/>
    <property type="match status" value="1"/>
</dbReference>
<dbReference type="SUPFAM" id="SSF54211">
    <property type="entry name" value="Ribosomal protein S5 domain 2-like"/>
    <property type="match status" value="1"/>
</dbReference>
<comment type="function">
    <text evidence="1">Catalyzes the phosphorylation of the position 2 hydroxy group of 4-diphosphocytidyl-2C-methyl-D-erythritol.</text>
</comment>
<comment type="catalytic activity">
    <reaction evidence="1">
        <text>4-CDP-2-C-methyl-D-erythritol + ATP = 4-CDP-2-C-methyl-D-erythritol 2-phosphate + ADP + H(+)</text>
        <dbReference type="Rhea" id="RHEA:18437"/>
        <dbReference type="ChEBI" id="CHEBI:15378"/>
        <dbReference type="ChEBI" id="CHEBI:30616"/>
        <dbReference type="ChEBI" id="CHEBI:57823"/>
        <dbReference type="ChEBI" id="CHEBI:57919"/>
        <dbReference type="ChEBI" id="CHEBI:456216"/>
        <dbReference type="EC" id="2.7.1.148"/>
    </reaction>
</comment>
<comment type="pathway">
    <text evidence="1">Isoprenoid biosynthesis; isopentenyl diphosphate biosynthesis via DXP pathway; isopentenyl diphosphate from 1-deoxy-D-xylulose 5-phosphate: step 3/6.</text>
</comment>
<comment type="similarity">
    <text evidence="1">Belongs to the GHMP kinase family. IspE subfamily.</text>
</comment>
<accession>Q72V75</accession>
<name>ISPE_LEPIC</name>
<evidence type="ECO:0000255" key="1">
    <source>
        <dbReference type="HAMAP-Rule" id="MF_00061"/>
    </source>
</evidence>